<comment type="function">
    <text evidence="1">Chemoattractant for eosinophils and basophils. Acts as a ligand for C-C chemokine receptor CCR3 which triggers Ca(2+) mobilization in eosinophils. Also acts as a ligand for CX3C chemokine receptor CX3CR1, inducing cell chemotaxis.</text>
</comment>
<comment type="subunit">
    <text evidence="1">Monomer.</text>
</comment>
<comment type="subcellular location">
    <subcellularLocation>
        <location evidence="1">Secreted</location>
    </subcellularLocation>
</comment>
<comment type="similarity">
    <text evidence="4">Belongs to the intercrine beta (chemokine CC) family.</text>
</comment>
<accession>Q64H35</accession>
<feature type="signal peptide" evidence="2">
    <location>
        <begin position="1"/>
        <end position="23"/>
    </location>
</feature>
<feature type="chain" id="PRO_0000005237" description="C-C motif chemokine 26">
    <location>
        <begin position="24"/>
        <end position="94"/>
    </location>
</feature>
<feature type="disulfide bond" evidence="1">
    <location>
        <begin position="33"/>
        <end position="57"/>
    </location>
</feature>
<feature type="disulfide bond" evidence="1">
    <location>
        <begin position="34"/>
        <end position="73"/>
    </location>
</feature>
<keyword id="KW-0145">Chemotaxis</keyword>
<keyword id="KW-0202">Cytokine</keyword>
<keyword id="KW-1015">Disulfide bond</keyword>
<keyword id="KW-0395">Inflammatory response</keyword>
<keyword id="KW-1185">Reference proteome</keyword>
<keyword id="KW-0964">Secreted</keyword>
<keyword id="KW-0732">Signal</keyword>
<proteinExistence type="inferred from homology"/>
<dbReference type="EMBL" id="AY675236">
    <property type="protein sequence ID" value="AAU14061.1"/>
    <property type="molecule type" value="mRNA"/>
</dbReference>
<dbReference type="RefSeq" id="NP_001005253.1">
    <property type="nucleotide sequence ID" value="NM_001005253.1"/>
</dbReference>
<dbReference type="SMR" id="Q64H35"/>
<dbReference type="FunCoup" id="Q64H35">
    <property type="interactions" value="110"/>
</dbReference>
<dbReference type="STRING" id="9615.ENSCAFP00000040578"/>
<dbReference type="PaxDb" id="9612-ENSCAFP00000040578"/>
<dbReference type="Ensembl" id="ENSCAFT00000043418.3">
    <property type="protein sequence ID" value="ENSCAFP00000040578.1"/>
    <property type="gene ID" value="ENSCAFG00000032573.3"/>
</dbReference>
<dbReference type="Ensembl" id="ENSCAFT00040024304.1">
    <property type="protein sequence ID" value="ENSCAFP00040021118.1"/>
    <property type="gene ID" value="ENSCAFG00040013153.1"/>
</dbReference>
<dbReference type="Ensembl" id="ENSCAFT00845007282.1">
    <property type="protein sequence ID" value="ENSCAFP00845005786.1"/>
    <property type="gene ID" value="ENSCAFG00845004038.1"/>
</dbReference>
<dbReference type="GeneID" id="448789"/>
<dbReference type="KEGG" id="cfa:448789"/>
<dbReference type="CTD" id="10344"/>
<dbReference type="VEuPathDB" id="HostDB:ENSCAFG00845004038"/>
<dbReference type="VGNC" id="VGNC:38888">
    <property type="gene designation" value="CCL26"/>
</dbReference>
<dbReference type="eggNOG" id="ENOG502T082">
    <property type="taxonomic scope" value="Eukaryota"/>
</dbReference>
<dbReference type="GeneTree" id="ENSGT01100000263482"/>
<dbReference type="HOGENOM" id="CLU_141716_6_0_1"/>
<dbReference type="InParanoid" id="Q64H35"/>
<dbReference type="OMA" id="ILPWKWV"/>
<dbReference type="OrthoDB" id="8934837at2759"/>
<dbReference type="TreeFam" id="TF334888"/>
<dbReference type="Proteomes" id="UP000002254">
    <property type="component" value="Chromosome 6"/>
</dbReference>
<dbReference type="Proteomes" id="UP000694429">
    <property type="component" value="Unplaced"/>
</dbReference>
<dbReference type="Proteomes" id="UP000694542">
    <property type="component" value="Chromosome 6"/>
</dbReference>
<dbReference type="Proteomes" id="UP000805418">
    <property type="component" value="Chromosome 6"/>
</dbReference>
<dbReference type="Bgee" id="ENSCAFG00000032573">
    <property type="expression patterns" value="Expressed in jejunum and 16 other cell types or tissues"/>
</dbReference>
<dbReference type="GO" id="GO:0005615">
    <property type="term" value="C:extracellular space"/>
    <property type="evidence" value="ECO:0000318"/>
    <property type="project" value="GO_Central"/>
</dbReference>
<dbReference type="GO" id="GO:0048020">
    <property type="term" value="F:CCR chemokine receptor binding"/>
    <property type="evidence" value="ECO:0000318"/>
    <property type="project" value="GO_Central"/>
</dbReference>
<dbReference type="GO" id="GO:0031728">
    <property type="term" value="F:CCR3 chemokine receptor binding"/>
    <property type="evidence" value="ECO:0007669"/>
    <property type="project" value="Ensembl"/>
</dbReference>
<dbReference type="GO" id="GO:0008009">
    <property type="term" value="F:chemokine activity"/>
    <property type="evidence" value="ECO:0000318"/>
    <property type="project" value="GO_Central"/>
</dbReference>
<dbReference type="GO" id="GO:0031737">
    <property type="term" value="F:CX3C chemokine receptor binding"/>
    <property type="evidence" value="ECO:0007669"/>
    <property type="project" value="Ensembl"/>
</dbReference>
<dbReference type="GO" id="GO:0061844">
    <property type="term" value="P:antimicrobial humoral immune response mediated by antimicrobial peptide"/>
    <property type="evidence" value="ECO:0000318"/>
    <property type="project" value="GO_Central"/>
</dbReference>
<dbReference type="GO" id="GO:0070098">
    <property type="term" value="P:chemokine-mediated signaling pathway"/>
    <property type="evidence" value="ECO:0000318"/>
    <property type="project" value="GO_Central"/>
</dbReference>
<dbReference type="GO" id="GO:0048245">
    <property type="term" value="P:eosinophil chemotaxis"/>
    <property type="evidence" value="ECO:0000318"/>
    <property type="project" value="GO_Central"/>
</dbReference>
<dbReference type="GO" id="GO:0006954">
    <property type="term" value="P:inflammatory response"/>
    <property type="evidence" value="ECO:0000318"/>
    <property type="project" value="GO_Central"/>
</dbReference>
<dbReference type="GO" id="GO:0002548">
    <property type="term" value="P:monocyte chemotaxis"/>
    <property type="evidence" value="ECO:0007669"/>
    <property type="project" value="Ensembl"/>
</dbReference>
<dbReference type="GO" id="GO:0030838">
    <property type="term" value="P:positive regulation of actin filament polymerization"/>
    <property type="evidence" value="ECO:0007669"/>
    <property type="project" value="Ensembl"/>
</dbReference>
<dbReference type="GO" id="GO:0030335">
    <property type="term" value="P:positive regulation of cell migration"/>
    <property type="evidence" value="ECO:0000318"/>
    <property type="project" value="GO_Central"/>
</dbReference>
<dbReference type="GO" id="GO:0050921">
    <property type="term" value="P:positive regulation of chemotaxis"/>
    <property type="evidence" value="ECO:0007669"/>
    <property type="project" value="Ensembl"/>
</dbReference>
<dbReference type="GO" id="GO:0001938">
    <property type="term" value="P:positive regulation of endothelial cell proliferation"/>
    <property type="evidence" value="ECO:0007669"/>
    <property type="project" value="Ensembl"/>
</dbReference>
<dbReference type="GO" id="GO:0010818">
    <property type="term" value="P:T cell chemotaxis"/>
    <property type="evidence" value="ECO:0007669"/>
    <property type="project" value="Ensembl"/>
</dbReference>
<dbReference type="CDD" id="cd00272">
    <property type="entry name" value="Chemokine_CC"/>
    <property type="match status" value="1"/>
</dbReference>
<dbReference type="FunFam" id="2.40.50.40:FF:000002">
    <property type="entry name" value="C-C motif chemokine"/>
    <property type="match status" value="1"/>
</dbReference>
<dbReference type="Gene3D" id="2.40.50.40">
    <property type="match status" value="1"/>
</dbReference>
<dbReference type="InterPro" id="IPR039809">
    <property type="entry name" value="Chemokine_b/g/d"/>
</dbReference>
<dbReference type="InterPro" id="IPR000827">
    <property type="entry name" value="Chemokine_CC_CS"/>
</dbReference>
<dbReference type="InterPro" id="IPR001811">
    <property type="entry name" value="Chemokine_IL8-like_dom"/>
</dbReference>
<dbReference type="InterPro" id="IPR036048">
    <property type="entry name" value="Interleukin_8-like_sf"/>
</dbReference>
<dbReference type="PANTHER" id="PTHR12015:SF73">
    <property type="entry name" value="C-C MOTIF CHEMOKINE 26"/>
    <property type="match status" value="1"/>
</dbReference>
<dbReference type="PANTHER" id="PTHR12015">
    <property type="entry name" value="SMALL INDUCIBLE CYTOKINE A"/>
    <property type="match status" value="1"/>
</dbReference>
<dbReference type="Pfam" id="PF00048">
    <property type="entry name" value="IL8"/>
    <property type="match status" value="1"/>
</dbReference>
<dbReference type="SMART" id="SM00199">
    <property type="entry name" value="SCY"/>
    <property type="match status" value="1"/>
</dbReference>
<dbReference type="SUPFAM" id="SSF54117">
    <property type="entry name" value="Interleukin 8-like chemokines"/>
    <property type="match status" value="1"/>
</dbReference>
<dbReference type="PROSITE" id="PS00472">
    <property type="entry name" value="SMALL_CYTOKINES_CC"/>
    <property type="match status" value="1"/>
</dbReference>
<gene>
    <name evidence="3" type="primary">CCL26</name>
</gene>
<name>CCL26_CANLF</name>
<protein>
    <recommendedName>
        <fullName evidence="3">C-C motif chemokine 26</fullName>
    </recommendedName>
    <alternativeName>
        <fullName evidence="3">Eotaxin-3</fullName>
    </alternativeName>
    <alternativeName>
        <fullName>Small-inducible cytokine A26</fullName>
    </alternativeName>
</protein>
<evidence type="ECO:0000250" key="1">
    <source>
        <dbReference type="UniProtKB" id="Q9Y258"/>
    </source>
</evidence>
<evidence type="ECO:0000255" key="2"/>
<evidence type="ECO:0000303" key="3">
    <source ref="1"/>
</evidence>
<evidence type="ECO:0000305" key="4"/>
<organism>
    <name type="scientific">Canis lupus familiaris</name>
    <name type="common">Dog</name>
    <name type="synonym">Canis familiaris</name>
    <dbReference type="NCBI Taxonomy" id="9615"/>
    <lineage>
        <taxon>Eukaryota</taxon>
        <taxon>Metazoa</taxon>
        <taxon>Chordata</taxon>
        <taxon>Craniata</taxon>
        <taxon>Vertebrata</taxon>
        <taxon>Euteleostomi</taxon>
        <taxon>Mammalia</taxon>
        <taxon>Eutheria</taxon>
        <taxon>Laurasiatheria</taxon>
        <taxon>Carnivora</taxon>
        <taxon>Caniformia</taxon>
        <taxon>Canidae</taxon>
        <taxon>Canis</taxon>
    </lineage>
</organism>
<sequence>MKSFPVAFLVLLIFILSVHRGVTTRGSDVAKFCCFQYSHKILPWKWIQSYKFTRSSCSQQAVIFTTKKGHKVCAQPKEKWVQRYIALLREQQQS</sequence>
<reference key="1">
    <citation type="submission" date="2004-07" db="EMBL/GenBank/DDBJ databases">
        <title>Identification of coding sequences for canine monocyte chemotactic protein-2 (CCL8), eotaxin 2 (CCL24), eotaxin 3 (CCL26) and C-C chemokine receptor 3 (CCR3).</title>
        <authorList>
            <person name="Peters I.R."/>
            <person name="Peeters D."/>
            <person name="Clercx C."/>
            <person name="Day M.J."/>
        </authorList>
    </citation>
    <scope>NUCLEOTIDE SEQUENCE [MRNA]</scope>
</reference>